<protein>
    <recommendedName>
        <fullName evidence="4">Terpene cyclase penB</fullName>
        <ecNumber evidence="6">4.2.3.-</ecNumber>
    </recommendedName>
    <alternativeName>
        <fullName evidence="4">Penitrem biosynthesis cluster protein B</fullName>
    </alternativeName>
</protein>
<gene>
    <name type="primary">penB</name>
</gene>
<feature type="chain" id="PRO_0000446545" description="Terpene cyclase penB">
    <location>
        <begin position="1"/>
        <end position="243"/>
    </location>
</feature>
<feature type="transmembrane region" description="Helical" evidence="1">
    <location>
        <begin position="19"/>
        <end position="39"/>
    </location>
</feature>
<feature type="transmembrane region" description="Helical" evidence="1">
    <location>
        <begin position="48"/>
        <end position="68"/>
    </location>
</feature>
<feature type="transmembrane region" description="Helical" evidence="1">
    <location>
        <begin position="78"/>
        <end position="98"/>
    </location>
</feature>
<feature type="transmembrane region" description="Helical" evidence="1">
    <location>
        <begin position="112"/>
        <end position="132"/>
    </location>
</feature>
<feature type="transmembrane region" description="Helical" evidence="1">
    <location>
        <begin position="137"/>
        <end position="157"/>
    </location>
</feature>
<feature type="transmembrane region" description="Helical" evidence="1">
    <location>
        <begin position="172"/>
        <end position="194"/>
    </location>
</feature>
<feature type="transmembrane region" description="Helical" evidence="1">
    <location>
        <begin position="205"/>
        <end position="225"/>
    </location>
</feature>
<feature type="glycosylation site" description="N-linked (GlcNAc...) asparagine" evidence="2">
    <location>
        <position position="111"/>
    </location>
</feature>
<evidence type="ECO:0000255" key="1"/>
<evidence type="ECO:0000255" key="2">
    <source>
        <dbReference type="PROSITE-ProRule" id="PRU00498"/>
    </source>
</evidence>
<evidence type="ECO:0000269" key="3">
    <source>
    </source>
</evidence>
<evidence type="ECO:0000303" key="4">
    <source>
    </source>
</evidence>
<evidence type="ECO:0000305" key="5"/>
<evidence type="ECO:0000305" key="6">
    <source>
    </source>
</evidence>
<reference key="1">
    <citation type="journal article" date="2015" name="Toxins">
        <title>Molecular cloning and functional analysis of gene clusters for the biosynthesis of indole-diterpenes in Penicillium crustosum and P. janthinellum.</title>
        <authorList>
            <person name="Nicholson M.J."/>
            <person name="Eaton C.J."/>
            <person name="Starkel C."/>
            <person name="Tapper B.A."/>
            <person name="Cox M.P."/>
            <person name="Scott B."/>
        </authorList>
    </citation>
    <scope>NUCLEOTIDE SEQUENCE [GENOMIC DNA]</scope>
    <scope>IDENTIFICATION</scope>
    <scope>FUNCTION</scope>
    <scope>PATHWAY</scope>
    <source>
        <strain>PN2402</strain>
    </source>
</reference>
<dbReference type="EC" id="4.2.3.-" evidence="6"/>
<dbReference type="EMBL" id="KC963408">
    <property type="protein sequence ID" value="AGZ20190.1"/>
    <property type="molecule type" value="Genomic_DNA"/>
</dbReference>
<dbReference type="SMR" id="A0A0E3D8M2"/>
<dbReference type="GlyCosmos" id="A0A0E3D8M2">
    <property type="glycosylation" value="1 site, No reported glycans"/>
</dbReference>
<dbReference type="GO" id="GO:0016020">
    <property type="term" value="C:membrane"/>
    <property type="evidence" value="ECO:0007669"/>
    <property type="project" value="UniProtKB-SubCell"/>
</dbReference>
<dbReference type="GO" id="GO:0016829">
    <property type="term" value="F:lyase activity"/>
    <property type="evidence" value="ECO:0007669"/>
    <property type="project" value="UniProtKB-KW"/>
</dbReference>
<dbReference type="InterPro" id="IPR039020">
    <property type="entry name" value="PaxB-like"/>
</dbReference>
<dbReference type="PANTHER" id="PTHR42038">
    <property type="match status" value="1"/>
</dbReference>
<dbReference type="PANTHER" id="PTHR42038:SF2">
    <property type="entry name" value="TERPENE CYCLASE AUSL"/>
    <property type="match status" value="1"/>
</dbReference>
<dbReference type="Pfam" id="PF25129">
    <property type="entry name" value="Pyr4-TMTC"/>
    <property type="match status" value="1"/>
</dbReference>
<name>PENB_PENCR</name>
<sequence>MDGFDVSQAPPEYRAVEPIANIFVLGMGLGWLINYVGMIYQSFKDETYGMAIMPLCCNIAWEIVYSLIYPSKSLIEQGVFIAGLTINIGVMYAAIKFAPKEWSHAPLVMRNLSLIFFLATLGFLTGHLALAAEIGHSLAYSWGAVVCQLLLSVGGLCQLLCRGSTRGASYTLWLSRFLGSSCTVAFASLRWMYWPESFSWLNSPLVLWSLALFLTVDGSYGLCYWYVRQYELSLKEAEGRKSK</sequence>
<comment type="function">
    <text evidence="3 6">Terpene cyclase; part of the gene cluster that mediates the biosynthesis of the indole diterpenes penitrems (PubMed:26213965). The geranylgeranyl diphosphate (GGPP) synthase penG catalyzes the first step in penitrem biosynthesis via conversion of farnesyl pyrophosphate and isopentyl pyrophosphate into geranylgeranyl pyrophosphate (GGPP) (Probable). Condensation of indole-3-glycerol phosphate with GGPP by the prenyl transferase penC then forms 3-geranylgeranylindole (3-GGI) (Probable). Epoxidation by the FAD-dependent monooxygenase penM leads to a epoxidized-GGI that is substrate of the terpene cyclase penB for cyclization to yield paspaline (Probable). Paspaline is subsequently converted to 13-desoxypaxilline by the cytochrome P450 monooxygenase penP, the latter being then converted to paxilline by the cytochrome P450 monooxygenase penQ (PubMed:26213965). Paxilline is converted to beta-paxitriol via C-10 ketoreduction by the short-chain dehydrogenase PC-15 which can be monoprenylated at the C-20 by the indole diterpene prenyltransferase penD (Probable). A two-step elimination (acetylation and elimination) process performed by the O-acetyltransferase PC-16 and the P.simplicissimum ptmI-ortholog not yet identified in P.crustosum, leads to the production of the prenylated form of penijanthine (Probable). The FAD-linked oxidoreductase ptmO then converts the prenylated form of penijanthine into PC-M5 which is in turn transformed into PC-M4 by the aromatic dimethylallyltransferase PC-22 (Probable). A series of oxidation steps involving 4 cytochrome P450 monooxygenases (PC-21, PC-05, PC-23, PC-20) and a FAD-dependent monooxygenase (PC-14) are required for the transformation of PC-M4 to penitrems A and E. Synthesis of these final products is proposed to proceed via penitrems D and C (PC-21, PC-05, PC-14) and penitrems B and F (PC-21, PC-05, PC-14, PC-23) (Probable).</text>
</comment>
<comment type="pathway">
    <text evidence="6">Secondary metabolite biosynthesis.</text>
</comment>
<comment type="subcellular location">
    <subcellularLocation>
        <location evidence="1">Membrane</location>
        <topology evidence="1">Multi-pass membrane protein</topology>
    </subcellularLocation>
</comment>
<comment type="similarity">
    <text evidence="5">Belongs to the paxB family.</text>
</comment>
<proteinExistence type="inferred from homology"/>
<organism>
    <name type="scientific">Penicillium crustosum</name>
    <name type="common">Blue mold fungus</name>
    <dbReference type="NCBI Taxonomy" id="36656"/>
    <lineage>
        <taxon>Eukaryota</taxon>
        <taxon>Fungi</taxon>
        <taxon>Dikarya</taxon>
        <taxon>Ascomycota</taxon>
        <taxon>Pezizomycotina</taxon>
        <taxon>Eurotiomycetes</taxon>
        <taxon>Eurotiomycetidae</taxon>
        <taxon>Eurotiales</taxon>
        <taxon>Aspergillaceae</taxon>
        <taxon>Penicillium</taxon>
    </lineage>
</organism>
<accession>A0A0E3D8M2</accession>
<keyword id="KW-0325">Glycoprotein</keyword>
<keyword id="KW-0456">Lyase</keyword>
<keyword id="KW-0472">Membrane</keyword>
<keyword id="KW-0812">Transmembrane</keyword>
<keyword id="KW-1133">Transmembrane helix</keyword>